<keyword id="KW-0963">Cytoplasm</keyword>
<keyword id="KW-0290">Folate-binding</keyword>
<keyword id="KW-1185">Reference proteome</keyword>
<keyword id="KW-0819">tRNA processing</keyword>
<sequence>MAFTPFPPRQPTASARLPLTLMTLDDWALATITGADSEKYMQGQVTADVSQMAEDQHLLAAHCDAKGKMWSNLRLFRDGDGFAWIERRSVREPQLTELKKYAVFSKVTIAPDDERVLLGVAGFQARAALANLFSELPSKEKQVVKEGATTLLWFEHPAERFLIVTDEATANMLTDKLRGEAELNNSQQWLALNIEAGFPVIDAANSGQFIPQATNLQALGGISFKKGCYTGQEMVARAKFRGANKRALWLLAGSASRLPEAGEDLELKMGENWRRTGTVLAAVKLEDGQVVVQVVMNNDMEPDSIFRVRDDANTLHIEPLPYSLEE</sequence>
<accession>P0ADE9</accession>
<accession>P39179</accession>
<accession>Q46826</accession>
<comment type="function">
    <text evidence="2">Folate-binding protein involved in regulating the level of ATP-DnaA and in the modification of some tRNAs. It is probably a key factor in regulatory networks that act via tRNA modification, such as initiation of chromosomal replication.</text>
</comment>
<comment type="subcellular location">
    <subcellularLocation>
        <location evidence="2">Cytoplasm</location>
    </subcellularLocation>
</comment>
<comment type="similarity">
    <text evidence="2">Belongs to the tRNA-modifying YgfZ family.</text>
</comment>
<name>YGFZ_SHIFL</name>
<evidence type="ECO:0000250" key="1"/>
<evidence type="ECO:0000255" key="2">
    <source>
        <dbReference type="HAMAP-Rule" id="MF_01175"/>
    </source>
</evidence>
<feature type="initiator methionine" description="Removed" evidence="1">
    <location>
        <position position="1"/>
    </location>
</feature>
<feature type="chain" id="PRO_0000169835" description="tRNA-modifying protein YgfZ">
    <location>
        <begin position="2"/>
        <end position="326"/>
    </location>
</feature>
<feature type="binding site" evidence="2">
    <location>
        <position position="27"/>
    </location>
    <ligand>
        <name>folate</name>
        <dbReference type="ChEBI" id="CHEBI:62501"/>
    </ligand>
</feature>
<feature type="binding site" evidence="2">
    <location>
        <position position="189"/>
    </location>
    <ligand>
        <name>folate</name>
        <dbReference type="ChEBI" id="CHEBI:62501"/>
    </ligand>
</feature>
<reference key="1">
    <citation type="journal article" date="2002" name="Nucleic Acids Res.">
        <title>Genome sequence of Shigella flexneri 2a: insights into pathogenicity through comparison with genomes of Escherichia coli K12 and O157.</title>
        <authorList>
            <person name="Jin Q."/>
            <person name="Yuan Z."/>
            <person name="Xu J."/>
            <person name="Wang Y."/>
            <person name="Shen Y."/>
            <person name="Lu W."/>
            <person name="Wang J."/>
            <person name="Liu H."/>
            <person name="Yang J."/>
            <person name="Yang F."/>
            <person name="Zhang X."/>
            <person name="Zhang J."/>
            <person name="Yang G."/>
            <person name="Wu H."/>
            <person name="Qu D."/>
            <person name="Dong J."/>
            <person name="Sun L."/>
            <person name="Xue Y."/>
            <person name="Zhao A."/>
            <person name="Gao Y."/>
            <person name="Zhu J."/>
            <person name="Kan B."/>
            <person name="Ding K."/>
            <person name="Chen S."/>
            <person name="Cheng H."/>
            <person name="Yao Z."/>
            <person name="He B."/>
            <person name="Chen R."/>
            <person name="Ma D."/>
            <person name="Qiang B."/>
            <person name="Wen Y."/>
            <person name="Hou Y."/>
            <person name="Yu J."/>
        </authorList>
    </citation>
    <scope>NUCLEOTIDE SEQUENCE [LARGE SCALE GENOMIC DNA]</scope>
    <source>
        <strain>301 / Serotype 2a</strain>
    </source>
</reference>
<reference key="2">
    <citation type="journal article" date="2003" name="Infect. Immun.">
        <title>Complete genome sequence and comparative genomics of Shigella flexneri serotype 2a strain 2457T.</title>
        <authorList>
            <person name="Wei J."/>
            <person name="Goldberg M.B."/>
            <person name="Burland V."/>
            <person name="Venkatesan M.M."/>
            <person name="Deng W."/>
            <person name="Fournier G."/>
            <person name="Mayhew G.F."/>
            <person name="Plunkett G. III"/>
            <person name="Rose D.J."/>
            <person name="Darling A."/>
            <person name="Mau B."/>
            <person name="Perna N.T."/>
            <person name="Payne S.M."/>
            <person name="Runyen-Janecky L.J."/>
            <person name="Zhou S."/>
            <person name="Schwartz D.C."/>
            <person name="Blattner F.R."/>
        </authorList>
    </citation>
    <scope>NUCLEOTIDE SEQUENCE [LARGE SCALE GENOMIC DNA]</scope>
    <source>
        <strain>ATCC 700930 / 2457T / Serotype 2a</strain>
    </source>
</reference>
<organism>
    <name type="scientific">Shigella flexneri</name>
    <dbReference type="NCBI Taxonomy" id="623"/>
    <lineage>
        <taxon>Bacteria</taxon>
        <taxon>Pseudomonadati</taxon>
        <taxon>Pseudomonadota</taxon>
        <taxon>Gammaproteobacteria</taxon>
        <taxon>Enterobacterales</taxon>
        <taxon>Enterobacteriaceae</taxon>
        <taxon>Shigella</taxon>
    </lineage>
</organism>
<proteinExistence type="inferred from homology"/>
<gene>
    <name evidence="2" type="primary">ygfZ</name>
    <name type="ordered locus">SF2884</name>
    <name type="ordered locus">S3083</name>
</gene>
<protein>
    <recommendedName>
        <fullName evidence="2">tRNA-modifying protein YgfZ</fullName>
    </recommendedName>
</protein>
<dbReference type="EMBL" id="AE005674">
    <property type="protein sequence ID" value="AAN44369.1"/>
    <property type="molecule type" value="Genomic_DNA"/>
</dbReference>
<dbReference type="EMBL" id="AE014073">
    <property type="protein sequence ID" value="AAP18191.1"/>
    <property type="molecule type" value="Genomic_DNA"/>
</dbReference>
<dbReference type="RefSeq" id="NP_708662.1">
    <property type="nucleotide sequence ID" value="NC_004337.2"/>
</dbReference>
<dbReference type="RefSeq" id="WP_000886062.1">
    <property type="nucleotide sequence ID" value="NZ_WPGW01000018.1"/>
</dbReference>
<dbReference type="SMR" id="P0ADE9"/>
<dbReference type="STRING" id="198214.SF2884"/>
<dbReference type="PaxDb" id="198214-SF2884"/>
<dbReference type="GeneID" id="1025887"/>
<dbReference type="GeneID" id="75205265"/>
<dbReference type="KEGG" id="sfl:SF2884"/>
<dbReference type="KEGG" id="sfx:S3083"/>
<dbReference type="PATRIC" id="fig|198214.7.peg.3433"/>
<dbReference type="HOGENOM" id="CLU_007884_6_1_6"/>
<dbReference type="Proteomes" id="UP000001006">
    <property type="component" value="Chromosome"/>
</dbReference>
<dbReference type="Proteomes" id="UP000002673">
    <property type="component" value="Chromosome"/>
</dbReference>
<dbReference type="GO" id="GO:0005737">
    <property type="term" value="C:cytoplasm"/>
    <property type="evidence" value="ECO:0007669"/>
    <property type="project" value="UniProtKB-SubCell"/>
</dbReference>
<dbReference type="GO" id="GO:0005542">
    <property type="term" value="F:folic acid binding"/>
    <property type="evidence" value="ECO:0007669"/>
    <property type="project" value="UniProtKB-UniRule"/>
</dbReference>
<dbReference type="GO" id="GO:0016226">
    <property type="term" value="P:iron-sulfur cluster assembly"/>
    <property type="evidence" value="ECO:0007669"/>
    <property type="project" value="TreeGrafter"/>
</dbReference>
<dbReference type="GO" id="GO:0009451">
    <property type="term" value="P:RNA modification"/>
    <property type="evidence" value="ECO:0007669"/>
    <property type="project" value="InterPro"/>
</dbReference>
<dbReference type="GO" id="GO:0008033">
    <property type="term" value="P:tRNA processing"/>
    <property type="evidence" value="ECO:0007669"/>
    <property type="project" value="UniProtKB-UniRule"/>
</dbReference>
<dbReference type="FunFam" id="2.40.30.160:FF:000001">
    <property type="entry name" value="tRNA-modifying protein YgfZ"/>
    <property type="match status" value="1"/>
</dbReference>
<dbReference type="FunFam" id="3.30.70.1400:FF:000002">
    <property type="entry name" value="tRNA-modifying protein YgfZ"/>
    <property type="match status" value="1"/>
</dbReference>
<dbReference type="FunFam" id="3.30.70.1630:FF:000001">
    <property type="entry name" value="tRNA-modifying protein YgfZ"/>
    <property type="match status" value="1"/>
</dbReference>
<dbReference type="Gene3D" id="2.40.30.160">
    <property type="match status" value="1"/>
</dbReference>
<dbReference type="Gene3D" id="3.30.70.1630">
    <property type="match status" value="1"/>
</dbReference>
<dbReference type="Gene3D" id="3.30.70.1400">
    <property type="entry name" value="Aminomethyltransferase beta-barrel domains"/>
    <property type="match status" value="1"/>
</dbReference>
<dbReference type="HAMAP" id="MF_01175">
    <property type="entry name" value="tRNA_modifying_YgfZ"/>
    <property type="match status" value="1"/>
</dbReference>
<dbReference type="InterPro" id="IPR006222">
    <property type="entry name" value="GCV_T_N"/>
</dbReference>
<dbReference type="InterPro" id="IPR029043">
    <property type="entry name" value="GcvT/YgfZ_C"/>
</dbReference>
<dbReference type="InterPro" id="IPR023758">
    <property type="entry name" value="tRNA-modifying_YgfZ"/>
</dbReference>
<dbReference type="InterPro" id="IPR045179">
    <property type="entry name" value="YgfZ/GcvT"/>
</dbReference>
<dbReference type="InterPro" id="IPR017703">
    <property type="entry name" value="YgfZ/GcvT_CS"/>
</dbReference>
<dbReference type="InterPro" id="IPR048451">
    <property type="entry name" value="YgfZ_barrel"/>
</dbReference>
<dbReference type="NCBIfam" id="NF007110">
    <property type="entry name" value="PRK09559.1"/>
    <property type="match status" value="1"/>
</dbReference>
<dbReference type="NCBIfam" id="TIGR03317">
    <property type="entry name" value="ygfZ_signature"/>
    <property type="match status" value="1"/>
</dbReference>
<dbReference type="PANTHER" id="PTHR22602">
    <property type="entry name" value="TRANSFERASE CAF17, MITOCHONDRIAL-RELATED"/>
    <property type="match status" value="1"/>
</dbReference>
<dbReference type="PANTHER" id="PTHR22602:SF0">
    <property type="entry name" value="TRANSFERASE CAF17, MITOCHONDRIAL-RELATED"/>
    <property type="match status" value="1"/>
</dbReference>
<dbReference type="Pfam" id="PF01571">
    <property type="entry name" value="GCV_T"/>
    <property type="match status" value="1"/>
</dbReference>
<dbReference type="Pfam" id="PF21130">
    <property type="entry name" value="YgfZ_barrel"/>
    <property type="match status" value="1"/>
</dbReference>
<dbReference type="SUPFAM" id="SSF101790">
    <property type="entry name" value="Aminomethyltransferase beta-barrel domain"/>
    <property type="match status" value="1"/>
</dbReference>
<dbReference type="SUPFAM" id="SSF103025">
    <property type="entry name" value="Folate-binding domain"/>
    <property type="match status" value="1"/>
</dbReference>